<evidence type="ECO:0000250" key="1">
    <source>
        <dbReference type="UniProtKB" id="P0ACG4"/>
    </source>
</evidence>
<evidence type="ECO:0000250" key="2">
    <source>
        <dbReference type="UniProtKB" id="P62670"/>
    </source>
</evidence>
<evidence type="ECO:0000255" key="3"/>
<evidence type="ECO:0000305" key="4"/>
<feature type="chain" id="PRO_0000199046" description="Stable plasmid inheritance protein">
    <location>
        <begin position="1"/>
        <end position="52"/>
    </location>
</feature>
<feature type="transmembrane region" description="Helical" evidence="3">
    <location>
        <begin position="6"/>
        <end position="26"/>
    </location>
</feature>
<geneLocation type="plasmid">
    <name>pO157</name>
</geneLocation>
<reference key="1">
    <citation type="journal article" date="1998" name="Nucleic Acids Res.">
        <title>The complete DNA sequence and analysis of the large virulence plasmid of Escherichia coli O157:H7.</title>
        <authorList>
            <person name="Burland V."/>
            <person name="Shao Y."/>
            <person name="Perna N.T."/>
            <person name="Plunkett G. III"/>
            <person name="Sofia H.J."/>
            <person name="Blattner F.R."/>
        </authorList>
    </citation>
    <scope>NUCLEOTIDE SEQUENCE [LARGE SCALE GENOMIC DNA]</scope>
    <source>
        <strain>O157:H7 / EDL933 / ATCC 700927 / EHEC</strain>
    </source>
</reference>
<reference key="2">
    <citation type="journal article" date="1998" name="DNA Res.">
        <title>Complete nucleotide sequences of 93-kb and 3.3-kb plasmids of an enterohemorrhagic Escherichia coli O157:H7 derived from Sakai outbreak.</title>
        <authorList>
            <person name="Makino K."/>
            <person name="Ishii K."/>
            <person name="Yasunaga T."/>
            <person name="Hattori M."/>
            <person name="Yokoyama K."/>
            <person name="Yatsudo H.C."/>
            <person name="Kubota Y."/>
            <person name="Yamaichi Y."/>
            <person name="Iida T."/>
            <person name="Yamamoto K."/>
            <person name="Honda T."/>
            <person name="Han C.G."/>
            <person name="Ohtsubo A."/>
            <person name="Kasamatsu M."/>
            <person name="Hayashi T."/>
            <person name="Kuhara S."/>
            <person name="Shinagawa H."/>
        </authorList>
    </citation>
    <scope>NUCLEOTIDE SEQUENCE [LARGE SCALE GENOMIC DNA]</scope>
    <source>
        <strain>O157:H7 / Sakai / RIMD 0509952 / EHEC</strain>
    </source>
</reference>
<protein>
    <recommendedName>
        <fullName>Stable plasmid inheritance protein</fullName>
    </recommendedName>
    <alternativeName>
        <fullName>F leading maintenance protein</fullName>
    </alternativeName>
</protein>
<accession>P62671</accession>
<accession>P16077</accession>
<gene>
    <name type="primary">flmA</name>
    <name type="synonym">parB</name>
    <name type="synonym">stm</name>
    <name type="ordered locus">L7090</name>
    <name type="ordered locus">ECO57PM53</name>
</gene>
<organism>
    <name type="scientific">Escherichia coli O157:H7</name>
    <dbReference type="NCBI Taxonomy" id="83334"/>
    <lineage>
        <taxon>Bacteria</taxon>
        <taxon>Pseudomonadati</taxon>
        <taxon>Pseudomonadota</taxon>
        <taxon>Gammaproteobacteria</taxon>
        <taxon>Enterobacterales</taxon>
        <taxon>Enterobacteriaceae</taxon>
        <taxon>Escherichia</taxon>
    </lineage>
</organism>
<sequence>MKLPRSSLVWCVLIVCLTLLIFTYLTRKSLCEIRYRDGYREVAAFMAYESGK</sequence>
<name>FLMA_ECO57</name>
<comment type="function">
    <text evidence="2">Toxic component of a type I toxin-antitoxin (TA) system (By similarity). Part of the plasmid maintenance system, encodes a toxic protein that collapses the transmembrane potential and arrests respiration (By similarity). When the adjacent non-translated flmB (sok) gene is disrupted FlmA no longer functions in plasmid maintenance (i.e. FlmB probably encodes an antisense antitoxin RNA) (By similarity). Translation of FlmA may be coupled to the upstream flmC gene (By similarity).</text>
</comment>
<comment type="subcellular location">
    <subcellularLocation>
        <location evidence="1">Cell inner membrane</location>
        <topology evidence="4">Single-pass membrane protein</topology>
    </subcellularLocation>
</comment>
<comment type="similarity">
    <text evidence="4">Belongs to the Hok/Gef family.</text>
</comment>
<keyword id="KW-0997">Cell inner membrane</keyword>
<keyword id="KW-1003">Cell membrane</keyword>
<keyword id="KW-0472">Membrane</keyword>
<keyword id="KW-0614">Plasmid</keyword>
<keyword id="KW-1185">Reference proteome</keyword>
<keyword id="KW-1277">Toxin-antitoxin system</keyword>
<keyword id="KW-0812">Transmembrane</keyword>
<keyword id="KW-1133">Transmembrane helix</keyword>
<proteinExistence type="inferred from homology"/>
<dbReference type="EMBL" id="AF074613">
    <property type="protein sequence ID" value="AAC70158.1"/>
    <property type="molecule type" value="Genomic_DNA"/>
</dbReference>
<dbReference type="EMBL" id="AB011549">
    <property type="protein sequence ID" value="BAA31810.1"/>
    <property type="molecule type" value="Genomic_DNA"/>
</dbReference>
<dbReference type="PIR" id="JS0432">
    <property type="entry name" value="BVECMA"/>
</dbReference>
<dbReference type="RefSeq" id="NP_052660.1">
    <property type="nucleotide sequence ID" value="NC_002128.1"/>
</dbReference>
<dbReference type="SMR" id="P62671"/>
<dbReference type="GeneID" id="1789673"/>
<dbReference type="KEGG" id="ece:Z_L7090"/>
<dbReference type="KEGG" id="ecs:pO157p53"/>
<dbReference type="PATRIC" id="fig|83334.175.peg.3555"/>
<dbReference type="HOGENOM" id="CLU_177638_2_1_6"/>
<dbReference type="OMA" id="NIRIASY"/>
<dbReference type="Proteomes" id="UP000000558">
    <property type="component" value="Plasmid pO157"/>
</dbReference>
<dbReference type="Proteomes" id="UP000002519">
    <property type="component" value="Plasmid pO157"/>
</dbReference>
<dbReference type="GO" id="GO:0005886">
    <property type="term" value="C:plasma membrane"/>
    <property type="evidence" value="ECO:0007669"/>
    <property type="project" value="UniProtKB-SubCell"/>
</dbReference>
<dbReference type="InterPro" id="IPR000021">
    <property type="entry name" value="Hok/gef_toxin"/>
</dbReference>
<dbReference type="InterPro" id="IPR018084">
    <property type="entry name" value="Hok/gef_toxin_CS"/>
</dbReference>
<dbReference type="NCBIfam" id="NF007279">
    <property type="entry name" value="PRK09738.1"/>
    <property type="match status" value="1"/>
</dbReference>
<dbReference type="Pfam" id="PF01848">
    <property type="entry name" value="HOK_GEF"/>
    <property type="match status" value="1"/>
</dbReference>
<dbReference type="PRINTS" id="PR00281">
    <property type="entry name" value="HOKGEFTOXIC"/>
</dbReference>
<dbReference type="PROSITE" id="PS00556">
    <property type="entry name" value="HOK_GEF"/>
    <property type="match status" value="1"/>
</dbReference>